<proteinExistence type="inferred from homology"/>
<protein>
    <recommendedName>
        <fullName evidence="2">Small ribosomal subunit protein uS12</fullName>
    </recommendedName>
    <alternativeName>
        <fullName evidence="4">30S ribosomal protein S12</fullName>
    </alternativeName>
</protein>
<reference key="1">
    <citation type="journal article" date="2009" name="BMC Genomics">
        <title>Evidence for niche adaptation in the genome of the bovine pathogen Streptococcus uberis.</title>
        <authorList>
            <person name="Ward P.N."/>
            <person name="Holden M.T.G."/>
            <person name="Leigh J.A."/>
            <person name="Lennard N."/>
            <person name="Bignell A."/>
            <person name="Barron A."/>
            <person name="Clark L."/>
            <person name="Quail M.A."/>
            <person name="Woodward J."/>
            <person name="Barrell B.G."/>
            <person name="Egan S.A."/>
            <person name="Field T.R."/>
            <person name="Maskell D."/>
            <person name="Kehoe M."/>
            <person name="Dowson C.G."/>
            <person name="Chanter N."/>
            <person name="Whatmore A.M."/>
            <person name="Bentley S.D."/>
            <person name="Parkhill J."/>
        </authorList>
    </citation>
    <scope>NUCLEOTIDE SEQUENCE [LARGE SCALE GENOMIC DNA]</scope>
    <source>
        <strain>ATCC BAA-854 / 0140J</strain>
    </source>
</reference>
<name>RS12_STRU0</name>
<feature type="chain" id="PRO_1000194219" description="Small ribosomal subunit protein uS12">
    <location>
        <begin position="1"/>
        <end position="137"/>
    </location>
</feature>
<feature type="region of interest" description="Disordered" evidence="3">
    <location>
        <begin position="1"/>
        <end position="21"/>
    </location>
</feature>
<feature type="region of interest" description="Disordered" evidence="3">
    <location>
        <begin position="34"/>
        <end position="57"/>
    </location>
</feature>
<feature type="modified residue" description="3-methylthioaspartic acid" evidence="1">
    <location>
        <position position="102"/>
    </location>
</feature>
<dbReference type="EMBL" id="AM946015">
    <property type="protein sequence ID" value="CAR43488.1"/>
    <property type="molecule type" value="Genomic_DNA"/>
</dbReference>
<dbReference type="RefSeq" id="WP_015911932.1">
    <property type="nucleotide sequence ID" value="NC_012004.1"/>
</dbReference>
<dbReference type="SMR" id="B9DVS4"/>
<dbReference type="STRING" id="218495.SUB1633"/>
<dbReference type="GeneID" id="93826960"/>
<dbReference type="KEGG" id="sub:SUB1633"/>
<dbReference type="eggNOG" id="COG0048">
    <property type="taxonomic scope" value="Bacteria"/>
</dbReference>
<dbReference type="HOGENOM" id="CLU_104295_1_2_9"/>
<dbReference type="OrthoDB" id="9802366at2"/>
<dbReference type="Proteomes" id="UP000000449">
    <property type="component" value="Chromosome"/>
</dbReference>
<dbReference type="GO" id="GO:0015935">
    <property type="term" value="C:small ribosomal subunit"/>
    <property type="evidence" value="ECO:0007669"/>
    <property type="project" value="InterPro"/>
</dbReference>
<dbReference type="GO" id="GO:0019843">
    <property type="term" value="F:rRNA binding"/>
    <property type="evidence" value="ECO:0007669"/>
    <property type="project" value="UniProtKB-UniRule"/>
</dbReference>
<dbReference type="GO" id="GO:0003735">
    <property type="term" value="F:structural constituent of ribosome"/>
    <property type="evidence" value="ECO:0007669"/>
    <property type="project" value="InterPro"/>
</dbReference>
<dbReference type="GO" id="GO:0000049">
    <property type="term" value="F:tRNA binding"/>
    <property type="evidence" value="ECO:0007669"/>
    <property type="project" value="UniProtKB-UniRule"/>
</dbReference>
<dbReference type="GO" id="GO:0006412">
    <property type="term" value="P:translation"/>
    <property type="evidence" value="ECO:0007669"/>
    <property type="project" value="UniProtKB-UniRule"/>
</dbReference>
<dbReference type="CDD" id="cd03368">
    <property type="entry name" value="Ribosomal_S12"/>
    <property type="match status" value="1"/>
</dbReference>
<dbReference type="FunFam" id="2.40.50.140:FF:000001">
    <property type="entry name" value="30S ribosomal protein S12"/>
    <property type="match status" value="1"/>
</dbReference>
<dbReference type="Gene3D" id="2.40.50.140">
    <property type="entry name" value="Nucleic acid-binding proteins"/>
    <property type="match status" value="1"/>
</dbReference>
<dbReference type="HAMAP" id="MF_00403_B">
    <property type="entry name" value="Ribosomal_uS12_B"/>
    <property type="match status" value="1"/>
</dbReference>
<dbReference type="InterPro" id="IPR012340">
    <property type="entry name" value="NA-bd_OB-fold"/>
</dbReference>
<dbReference type="InterPro" id="IPR006032">
    <property type="entry name" value="Ribosomal_uS12"/>
</dbReference>
<dbReference type="InterPro" id="IPR005679">
    <property type="entry name" value="Ribosomal_uS12_bac"/>
</dbReference>
<dbReference type="NCBIfam" id="TIGR00981">
    <property type="entry name" value="rpsL_bact"/>
    <property type="match status" value="1"/>
</dbReference>
<dbReference type="PANTHER" id="PTHR11652">
    <property type="entry name" value="30S RIBOSOMAL PROTEIN S12 FAMILY MEMBER"/>
    <property type="match status" value="1"/>
</dbReference>
<dbReference type="Pfam" id="PF00164">
    <property type="entry name" value="Ribosom_S12_S23"/>
    <property type="match status" value="1"/>
</dbReference>
<dbReference type="PRINTS" id="PR01034">
    <property type="entry name" value="RIBOSOMALS12"/>
</dbReference>
<dbReference type="SUPFAM" id="SSF50249">
    <property type="entry name" value="Nucleic acid-binding proteins"/>
    <property type="match status" value="1"/>
</dbReference>
<dbReference type="PROSITE" id="PS00055">
    <property type="entry name" value="RIBOSOMAL_S12"/>
    <property type="match status" value="1"/>
</dbReference>
<keyword id="KW-0488">Methylation</keyword>
<keyword id="KW-1185">Reference proteome</keyword>
<keyword id="KW-0687">Ribonucleoprotein</keyword>
<keyword id="KW-0689">Ribosomal protein</keyword>
<keyword id="KW-0694">RNA-binding</keyword>
<keyword id="KW-0699">rRNA-binding</keyword>
<keyword id="KW-0820">tRNA-binding</keyword>
<evidence type="ECO:0000250" key="1"/>
<evidence type="ECO:0000255" key="2">
    <source>
        <dbReference type="HAMAP-Rule" id="MF_00403"/>
    </source>
</evidence>
<evidence type="ECO:0000256" key="3">
    <source>
        <dbReference type="SAM" id="MobiDB-lite"/>
    </source>
</evidence>
<evidence type="ECO:0000305" key="4"/>
<organism>
    <name type="scientific">Streptococcus uberis (strain ATCC BAA-854 / 0140J)</name>
    <dbReference type="NCBI Taxonomy" id="218495"/>
    <lineage>
        <taxon>Bacteria</taxon>
        <taxon>Bacillati</taxon>
        <taxon>Bacillota</taxon>
        <taxon>Bacilli</taxon>
        <taxon>Lactobacillales</taxon>
        <taxon>Streptococcaceae</taxon>
        <taxon>Streptococcus</taxon>
    </lineage>
</organism>
<comment type="function">
    <text evidence="2">With S4 and S5 plays an important role in translational accuracy.</text>
</comment>
<comment type="function">
    <text evidence="2">Interacts with and stabilizes bases of the 16S rRNA that are involved in tRNA selection in the A site and with the mRNA backbone. Located at the interface of the 30S and 50S subunits, it traverses the body of the 30S subunit contacting proteins on the other side and probably holding the rRNA structure together. The combined cluster of proteins S8, S12 and S17 appears to hold together the shoulder and platform of the 30S subunit.</text>
</comment>
<comment type="subunit">
    <text evidence="2">Part of the 30S ribosomal subunit. Contacts proteins S8 and S17. May interact with IF1 in the 30S initiation complex.</text>
</comment>
<comment type="similarity">
    <text evidence="2">Belongs to the universal ribosomal protein uS12 family.</text>
</comment>
<gene>
    <name evidence="2" type="primary">rpsL</name>
    <name type="ordered locus">SUB1633</name>
</gene>
<accession>B9DVS4</accession>
<sequence>MPTINQLVRKPRKSKIEKSDSPALNIGYNSHKKVHTKIAAPQKRGVATRVGTMTPKKPNSALRKFARVRLSNLIEVTAYIPGIGHNLQEHSVVLIRGGRVKDLPGVRYHIVRGALDTAGVADRKQGRSKYGAKRPKG</sequence>